<comment type="similarity">
    <text evidence="2">Belongs to the SLAIN motif-containing family.</text>
</comment>
<reference key="1">
    <citation type="submission" date="2003-08" db="EMBL/GenBank/DDBJ databases">
        <authorList>
            <consortium name="NIH - Zebrafish Gene Collection (ZGC) project"/>
        </authorList>
    </citation>
    <scope>NUCLEOTIDE SEQUENCE [LARGE SCALE MRNA]</scope>
    <source>
        <strain>AB</strain>
        <tissue>Ovary</tissue>
    </source>
</reference>
<name>SLAIL_DANRE</name>
<feature type="chain" id="PRO_0000316970" description="SLAIN motif-containing protein-like">
    <location>
        <begin position="1"/>
        <end position="585"/>
    </location>
</feature>
<feature type="region of interest" description="Disordered" evidence="1">
    <location>
        <begin position="1"/>
        <end position="34"/>
    </location>
</feature>
<feature type="region of interest" description="Disordered" evidence="1">
    <location>
        <begin position="55"/>
        <end position="125"/>
    </location>
</feature>
<feature type="region of interest" description="Disordered" evidence="1">
    <location>
        <begin position="324"/>
        <end position="365"/>
    </location>
</feature>
<feature type="region of interest" description="Disordered" evidence="1">
    <location>
        <begin position="402"/>
        <end position="476"/>
    </location>
</feature>
<feature type="region of interest" description="Disordered" evidence="1">
    <location>
        <begin position="492"/>
        <end position="585"/>
    </location>
</feature>
<feature type="compositionally biased region" description="Polar residues" evidence="1">
    <location>
        <begin position="68"/>
        <end position="83"/>
    </location>
</feature>
<feature type="compositionally biased region" description="Low complexity" evidence="1">
    <location>
        <begin position="327"/>
        <end position="345"/>
    </location>
</feature>
<feature type="compositionally biased region" description="Acidic residues" evidence="1">
    <location>
        <begin position="351"/>
        <end position="365"/>
    </location>
</feature>
<feature type="compositionally biased region" description="Polar residues" evidence="1">
    <location>
        <begin position="425"/>
        <end position="434"/>
    </location>
</feature>
<feature type="compositionally biased region" description="Polar residues" evidence="1">
    <location>
        <begin position="441"/>
        <end position="476"/>
    </location>
</feature>
<feature type="compositionally biased region" description="Polar residues" evidence="1">
    <location>
        <begin position="549"/>
        <end position="563"/>
    </location>
</feature>
<feature type="compositionally biased region" description="Basic and acidic residues" evidence="1">
    <location>
        <begin position="575"/>
        <end position="585"/>
    </location>
</feature>
<feature type="sequence conflict" description="In Ref. 1; AAI52661." evidence="2" ref="1">
    <original>G</original>
    <variation>A</variation>
    <location>
        <position position="412"/>
    </location>
</feature>
<keyword id="KW-0175">Coiled coil</keyword>
<keyword id="KW-1185">Reference proteome</keyword>
<protein>
    <recommendedName>
        <fullName>SLAIN motif-containing protein-like</fullName>
    </recommendedName>
</protein>
<evidence type="ECO:0000256" key="1">
    <source>
        <dbReference type="SAM" id="MobiDB-lite"/>
    </source>
</evidence>
<evidence type="ECO:0000305" key="2"/>
<sequence>MVVPDSGSDIQPADNGDTDKVMSNSEPELDPNLTTVELEEVRKLQDLVRQLEVQNQTLHNRSRKQVLGGTNNSNLKAGSNINNLHKVMDTSPGAEEAGNLELSPPADSSGSEDMSPLPDTSRVEEQDGFLSLPCSSGSKQTMGWFVTSNCDSGMLGASEASKDQSALDEVDVLDLELCAKAEDEDSWLYVSPKKEVVIEHGPESPLKWCRKVLDHPSPATEVACRTLINRLDQSSRWKNVYSSPSQTSEAGVSASSSAGYLKSTNKTLLTSGSSGYMGVYSALSSQSSVDSELSSDESISMGYKLQDLTDVQIMARLQEESLRQDYASTSASRRSSSASLQSLRRGTYSDQEFDSYSQEDEEDECCSLPQHLQRYSPSPHSSPRCLSPSTLAEYNRLSAPRPRLSRCSLAGGGAKSEEELRHSMPNLTPRTSLRSLEAVRNSRSMEANLQSSGNRTSCLPHSPKGASSSRMRSDGQSPLYLRAPMKALSPVGSMSALRQHAKGPPSAQVGHTEAMRRVQSPGSKNGVGYSGCRTAVVTRQTPGRGMTPASPSSRTRLPQTPRSRSLGMTKPSGHLTDESWKDGCY</sequence>
<accession>Q7SXC6</accession>
<accession>A7YYH2</accession>
<dbReference type="EMBL" id="BC055660">
    <property type="protein sequence ID" value="AAH55660.1"/>
    <property type="molecule type" value="mRNA"/>
</dbReference>
<dbReference type="EMBL" id="BC152660">
    <property type="protein sequence ID" value="AAI52661.1"/>
    <property type="molecule type" value="mRNA"/>
</dbReference>
<dbReference type="RefSeq" id="NP_956029.1">
    <property type="nucleotide sequence ID" value="NM_199735.1"/>
</dbReference>
<dbReference type="RefSeq" id="XP_005157182.1">
    <property type="nucleotide sequence ID" value="XM_005157125.3"/>
</dbReference>
<dbReference type="SMR" id="Q7SXC6"/>
<dbReference type="FunCoup" id="Q7SXC6">
    <property type="interactions" value="2"/>
</dbReference>
<dbReference type="STRING" id="7955.ENSDARP00000032457"/>
<dbReference type="PaxDb" id="7955-ENSDARP00000032457"/>
<dbReference type="GeneID" id="326023"/>
<dbReference type="KEGG" id="dre:326023"/>
<dbReference type="AGR" id="ZFIN:ZDB-GENE-030131-4748"/>
<dbReference type="ZFIN" id="ZDB-GENE-030131-4748">
    <property type="gene designation" value="zgc:66447"/>
</dbReference>
<dbReference type="eggNOG" id="ENOG502QTTZ">
    <property type="taxonomic scope" value="Eukaryota"/>
</dbReference>
<dbReference type="InParanoid" id="Q7SXC6"/>
<dbReference type="OrthoDB" id="6347145at2759"/>
<dbReference type="PhylomeDB" id="Q7SXC6"/>
<dbReference type="TreeFam" id="TF331616"/>
<dbReference type="PRO" id="PR:Q7SXC6"/>
<dbReference type="Proteomes" id="UP000000437">
    <property type="component" value="Alternate scaffold 14"/>
</dbReference>
<dbReference type="Proteomes" id="UP000000437">
    <property type="component" value="Chromosome 14"/>
</dbReference>
<dbReference type="GO" id="GO:0031122">
    <property type="term" value="P:cytoplasmic microtubule organization"/>
    <property type="evidence" value="ECO:0000318"/>
    <property type="project" value="GO_Central"/>
</dbReference>
<dbReference type="GO" id="GO:0007020">
    <property type="term" value="P:microtubule nucleation"/>
    <property type="evidence" value="ECO:0000318"/>
    <property type="project" value="GO_Central"/>
</dbReference>
<dbReference type="GO" id="GO:0031116">
    <property type="term" value="P:positive regulation of microtubule polymerization"/>
    <property type="evidence" value="ECO:0000318"/>
    <property type="project" value="GO_Central"/>
</dbReference>
<dbReference type="InterPro" id="IPR026179">
    <property type="entry name" value="Slain"/>
</dbReference>
<dbReference type="PANTHER" id="PTHR22406">
    <property type="entry name" value="NASCENT POLYPEPTIDE-ASSOCIATED COMPLEX SUBUNIT ALPHA, MUSCLE-SPECIFIC FORM"/>
    <property type="match status" value="1"/>
</dbReference>
<dbReference type="PANTHER" id="PTHR22406:SF5">
    <property type="entry name" value="SLAIN MOTIF-CONTAINING PROTEIN-LIKE"/>
    <property type="match status" value="1"/>
</dbReference>
<dbReference type="Pfam" id="PF15301">
    <property type="entry name" value="SLAIN"/>
    <property type="match status" value="1"/>
</dbReference>
<proteinExistence type="evidence at transcript level"/>
<organism>
    <name type="scientific">Danio rerio</name>
    <name type="common">Zebrafish</name>
    <name type="synonym">Brachydanio rerio</name>
    <dbReference type="NCBI Taxonomy" id="7955"/>
    <lineage>
        <taxon>Eukaryota</taxon>
        <taxon>Metazoa</taxon>
        <taxon>Chordata</taxon>
        <taxon>Craniata</taxon>
        <taxon>Vertebrata</taxon>
        <taxon>Euteleostomi</taxon>
        <taxon>Actinopterygii</taxon>
        <taxon>Neopterygii</taxon>
        <taxon>Teleostei</taxon>
        <taxon>Ostariophysi</taxon>
        <taxon>Cypriniformes</taxon>
        <taxon>Danionidae</taxon>
        <taxon>Danioninae</taxon>
        <taxon>Danio</taxon>
    </lineage>
</organism>
<gene>
    <name type="ORF">zgc:66447</name>
</gene>